<gene>
    <name type="primary">PCBD2</name>
    <name type="synonym">DCOHM</name>
</gene>
<comment type="function">
    <text evidence="1">Involved in tetrahydrobiopterin biosynthesis. Seems to both prevent the formation of 7-pterins and accelerate the formation of quinonoid-BH2 (By similarity).</text>
</comment>
<comment type="function">
    <text>Regulates the dimerization of homeodomain protein HNF-1-alpha and enhances its transcriptional activity.</text>
</comment>
<comment type="catalytic activity">
    <reaction>
        <text>(4aS,6R)-4a-hydroxy-L-erythro-5,6,7,8-tetrahydrobiopterin = (6R)-L-erythro-6,7-dihydrobiopterin + H2O</text>
        <dbReference type="Rhea" id="RHEA:11920"/>
        <dbReference type="ChEBI" id="CHEBI:15377"/>
        <dbReference type="ChEBI" id="CHEBI:15642"/>
        <dbReference type="ChEBI" id="CHEBI:43120"/>
        <dbReference type="EC" id="4.2.1.96"/>
    </reaction>
</comment>
<comment type="tissue specificity">
    <text>Highest level found in the kidney, liver, heart and ovarian follicles.</text>
</comment>
<comment type="similarity">
    <text evidence="2">Belongs to the pterin-4-alpha-carbinolamine dehydratase family.</text>
</comment>
<proteinExistence type="evidence at transcript level"/>
<sequence>MSSQSHWLTAEERTQVLLDLKASGWSESGERDAIYKEFNFKNFNQAFGFMTRVALQAENMNHHPEWFNVYSKVQITLISHDCGGLTKRDVKLAQFIDKAAASV</sequence>
<name>PHS2_CHICK</name>
<reference key="1">
    <citation type="journal article" date="2001" name="Biochem. J.">
        <title>Differential expression of chicken dimerization cofactor of hepatocyte nuclear factor-1 (DcoH) and its novel counterpart, DcoHalpha.</title>
        <authorList>
            <person name="Kim H."/>
            <person name="You S."/>
            <person name="Foster L.K."/>
            <person name="Farris J."/>
            <person name="Choi Y.-J."/>
            <person name="Foster D.N."/>
        </authorList>
    </citation>
    <scope>NUCLEOTIDE SEQUENCE [MRNA]</scope>
</reference>
<protein>
    <recommendedName>
        <fullName>Pterin-4-alpha-carbinolamine dehydratase 2</fullName>
        <shortName>PHS 2</shortName>
        <ecNumber>4.2.1.96</ecNumber>
    </recommendedName>
    <alternativeName>
        <fullName>4-alpha-hydroxy-tetrahydropterin dehydratase 2</fullName>
    </alternativeName>
    <alternativeName>
        <fullName>DCoH-alpha</fullName>
    </alternativeName>
    <alternativeName>
        <fullName>DcoH-like protein DCoHm</fullName>
    </alternativeName>
    <alternativeName>
        <fullName>Hepatocyte nuclear factor 1a dimerization cofactor isoform</fullName>
    </alternativeName>
</protein>
<dbReference type="EC" id="4.2.1.96"/>
<dbReference type="EMBL" id="AF190051">
    <property type="protein sequence ID" value="AAG17122.1"/>
    <property type="molecule type" value="mRNA"/>
</dbReference>
<dbReference type="RefSeq" id="NP_989534.1">
    <property type="nucleotide sequence ID" value="NM_204203.2"/>
</dbReference>
<dbReference type="SMR" id="Q9DG45"/>
<dbReference type="FunCoup" id="Q9DG45">
    <property type="interactions" value="115"/>
</dbReference>
<dbReference type="STRING" id="9031.ENSGALP00000010278"/>
<dbReference type="PaxDb" id="9031-ENSGALP00000010278"/>
<dbReference type="GeneID" id="374030"/>
<dbReference type="KEGG" id="gga:374030"/>
<dbReference type="CTD" id="84105"/>
<dbReference type="VEuPathDB" id="HostDB:geneid_374030"/>
<dbReference type="eggNOG" id="KOG4073">
    <property type="taxonomic scope" value="Eukaryota"/>
</dbReference>
<dbReference type="InParanoid" id="Q9DG45"/>
<dbReference type="OrthoDB" id="277398at2759"/>
<dbReference type="PhylomeDB" id="Q9DG45"/>
<dbReference type="PRO" id="PR:Q9DG45"/>
<dbReference type="Proteomes" id="UP000000539">
    <property type="component" value="Unassembled WGS sequence"/>
</dbReference>
<dbReference type="GO" id="GO:0008124">
    <property type="term" value="F:4-alpha-hydroxytetrahydrobiopterin dehydratase activity"/>
    <property type="evidence" value="ECO:0000318"/>
    <property type="project" value="GO_Central"/>
</dbReference>
<dbReference type="GO" id="GO:0006729">
    <property type="term" value="P:tetrahydrobiopterin biosynthetic process"/>
    <property type="evidence" value="ECO:0007669"/>
    <property type="project" value="UniProtKB-KW"/>
</dbReference>
<dbReference type="CDD" id="cd00914">
    <property type="entry name" value="PCD_DCoH_subfamily_b"/>
    <property type="match status" value="1"/>
</dbReference>
<dbReference type="FunFam" id="3.30.1360.20:FF:000001">
    <property type="entry name" value="Pterin-4-alpha-carbinolamine dehydratase 2"/>
    <property type="match status" value="1"/>
</dbReference>
<dbReference type="Gene3D" id="3.30.1360.20">
    <property type="entry name" value="Transcriptional coactivator/pterin dehydratase"/>
    <property type="match status" value="1"/>
</dbReference>
<dbReference type="HAMAP" id="MF_00434">
    <property type="entry name" value="Pterin_4_alpha"/>
    <property type="match status" value="1"/>
</dbReference>
<dbReference type="InterPro" id="IPR036428">
    <property type="entry name" value="PCD_sf"/>
</dbReference>
<dbReference type="InterPro" id="IPR001533">
    <property type="entry name" value="Pterin_deHydtase"/>
</dbReference>
<dbReference type="NCBIfam" id="NF002018">
    <property type="entry name" value="PRK00823.1-3"/>
    <property type="match status" value="1"/>
</dbReference>
<dbReference type="PANTHER" id="PTHR12599">
    <property type="entry name" value="PTERIN-4-ALPHA-CARBINOLAMINE DEHYDRATASE"/>
    <property type="match status" value="1"/>
</dbReference>
<dbReference type="PANTHER" id="PTHR12599:SF15">
    <property type="entry name" value="PTERIN-4-ALPHA-CARBINOLAMINE DEHYDRATASE 2"/>
    <property type="match status" value="1"/>
</dbReference>
<dbReference type="Pfam" id="PF01329">
    <property type="entry name" value="Pterin_4a"/>
    <property type="match status" value="1"/>
</dbReference>
<dbReference type="SUPFAM" id="SSF55248">
    <property type="entry name" value="PCD-like"/>
    <property type="match status" value="1"/>
</dbReference>
<evidence type="ECO:0000250" key="1"/>
<evidence type="ECO:0000305" key="2"/>
<keyword id="KW-0456">Lyase</keyword>
<keyword id="KW-1185">Reference proteome</keyword>
<keyword id="KW-0783">Tetrahydrobiopterin biosynthesis</keyword>
<accession>Q9DG45</accession>
<feature type="chain" id="PRO_0000063059" description="Pterin-4-alpha-carbinolamine dehydratase 2">
    <location>
        <begin position="1"/>
        <end position="103"/>
    </location>
</feature>
<organism>
    <name type="scientific">Gallus gallus</name>
    <name type="common">Chicken</name>
    <dbReference type="NCBI Taxonomy" id="9031"/>
    <lineage>
        <taxon>Eukaryota</taxon>
        <taxon>Metazoa</taxon>
        <taxon>Chordata</taxon>
        <taxon>Craniata</taxon>
        <taxon>Vertebrata</taxon>
        <taxon>Euteleostomi</taxon>
        <taxon>Archelosauria</taxon>
        <taxon>Archosauria</taxon>
        <taxon>Dinosauria</taxon>
        <taxon>Saurischia</taxon>
        <taxon>Theropoda</taxon>
        <taxon>Coelurosauria</taxon>
        <taxon>Aves</taxon>
        <taxon>Neognathae</taxon>
        <taxon>Galloanserae</taxon>
        <taxon>Galliformes</taxon>
        <taxon>Phasianidae</taxon>
        <taxon>Phasianinae</taxon>
        <taxon>Gallus</taxon>
    </lineage>
</organism>